<organism>
    <name type="scientific">Oenothera parviflora</name>
    <name type="common">Small-flowered evening primrose</name>
    <name type="synonym">Oenothera cruciata</name>
    <dbReference type="NCBI Taxonomy" id="482429"/>
    <lineage>
        <taxon>Eukaryota</taxon>
        <taxon>Viridiplantae</taxon>
        <taxon>Streptophyta</taxon>
        <taxon>Embryophyta</taxon>
        <taxon>Tracheophyta</taxon>
        <taxon>Spermatophyta</taxon>
        <taxon>Magnoliopsida</taxon>
        <taxon>eudicotyledons</taxon>
        <taxon>Gunneridae</taxon>
        <taxon>Pentapetalae</taxon>
        <taxon>rosids</taxon>
        <taxon>malvids</taxon>
        <taxon>Myrtales</taxon>
        <taxon>Onagraceae</taxon>
        <taxon>Onagroideae</taxon>
        <taxon>Onagreae</taxon>
        <taxon>Oenothera</taxon>
    </lineage>
</organism>
<comment type="catalytic activity">
    <reaction evidence="1">
        <text>a plastoquinone + NADH + (n+1) H(+)(in) = a plastoquinol + NAD(+) + n H(+)(out)</text>
        <dbReference type="Rhea" id="RHEA:42608"/>
        <dbReference type="Rhea" id="RHEA-COMP:9561"/>
        <dbReference type="Rhea" id="RHEA-COMP:9562"/>
        <dbReference type="ChEBI" id="CHEBI:15378"/>
        <dbReference type="ChEBI" id="CHEBI:17757"/>
        <dbReference type="ChEBI" id="CHEBI:57540"/>
        <dbReference type="ChEBI" id="CHEBI:57945"/>
        <dbReference type="ChEBI" id="CHEBI:62192"/>
    </reaction>
</comment>
<comment type="catalytic activity">
    <reaction evidence="1">
        <text>a plastoquinone + NADPH + (n+1) H(+)(in) = a plastoquinol + NADP(+) + n H(+)(out)</text>
        <dbReference type="Rhea" id="RHEA:42612"/>
        <dbReference type="Rhea" id="RHEA-COMP:9561"/>
        <dbReference type="Rhea" id="RHEA-COMP:9562"/>
        <dbReference type="ChEBI" id="CHEBI:15378"/>
        <dbReference type="ChEBI" id="CHEBI:17757"/>
        <dbReference type="ChEBI" id="CHEBI:57783"/>
        <dbReference type="ChEBI" id="CHEBI:58349"/>
        <dbReference type="ChEBI" id="CHEBI:62192"/>
    </reaction>
</comment>
<comment type="subcellular location">
    <subcellularLocation>
        <location evidence="1">Plastid</location>
        <location evidence="1">Chloroplast thylakoid membrane</location>
        <topology evidence="1">Multi-pass membrane protein</topology>
    </subcellularLocation>
</comment>
<comment type="similarity">
    <text evidence="1">Belongs to the complex I subunit 4 family.</text>
</comment>
<keyword id="KW-0150">Chloroplast</keyword>
<keyword id="KW-0472">Membrane</keyword>
<keyword id="KW-0520">NAD</keyword>
<keyword id="KW-0521">NADP</keyword>
<keyword id="KW-0934">Plastid</keyword>
<keyword id="KW-0618">Plastoquinone</keyword>
<keyword id="KW-0874">Quinone</keyword>
<keyword id="KW-0793">Thylakoid</keyword>
<keyword id="KW-1278">Translocase</keyword>
<keyword id="KW-0812">Transmembrane</keyword>
<keyword id="KW-1133">Transmembrane helix</keyword>
<accession>B0Z5H7</accession>
<protein>
    <recommendedName>
        <fullName evidence="1">NAD(P)H-quinone oxidoreductase chain 4, chloroplastic</fullName>
        <ecNumber evidence="1">7.1.1.-</ecNumber>
    </recommendedName>
    <alternativeName>
        <fullName evidence="1">NAD(P)H dehydrogenase, chain 4</fullName>
    </alternativeName>
    <alternativeName>
        <fullName evidence="1">NADH-plastoquinone oxidoreductase chain 4</fullName>
    </alternativeName>
</protein>
<gene>
    <name evidence="1" type="primary">ndhD</name>
</gene>
<reference key="1">
    <citation type="journal article" date="2008" name="Nucleic Acids Res.">
        <title>The complete nucleotide sequences of the five genetically distinct plastid genomes of Oenothera, subsection Oenothera: I. Sequence evaluation and plastome evolution.</title>
        <authorList>
            <person name="Greiner S."/>
            <person name="Wang X."/>
            <person name="Rauwolf U."/>
            <person name="Silber M.V."/>
            <person name="Mayer K."/>
            <person name="Meurer J."/>
            <person name="Haberer G."/>
            <person name="Herrmann R.G."/>
        </authorList>
    </citation>
    <scope>NUCLEOTIDE SEQUENCE [LARGE SCALE GENOMIC DNA]</scope>
    <source>
        <strain>cv. Atrovirens</strain>
    </source>
</reference>
<feature type="chain" id="PRO_0000343299" description="NAD(P)H-quinone oxidoreductase chain 4, chloroplastic">
    <location>
        <begin position="1"/>
        <end position="500"/>
    </location>
</feature>
<feature type="transmembrane region" description="Helical" evidence="1">
    <location>
        <begin position="4"/>
        <end position="24"/>
    </location>
</feature>
<feature type="transmembrane region" description="Helical" evidence="1">
    <location>
        <begin position="37"/>
        <end position="57"/>
    </location>
</feature>
<feature type="transmembrane region" description="Helical" evidence="1">
    <location>
        <begin position="87"/>
        <end position="107"/>
    </location>
</feature>
<feature type="transmembrane region" description="Helical" evidence="1">
    <location>
        <begin position="111"/>
        <end position="131"/>
    </location>
</feature>
<feature type="transmembrane region" description="Helical" evidence="1">
    <location>
        <begin position="134"/>
        <end position="154"/>
    </location>
</feature>
<feature type="transmembrane region" description="Helical" evidence="1">
    <location>
        <begin position="167"/>
        <end position="187"/>
    </location>
</feature>
<feature type="transmembrane region" description="Helical" evidence="1">
    <location>
        <begin position="208"/>
        <end position="228"/>
    </location>
</feature>
<feature type="transmembrane region" description="Helical" evidence="1">
    <location>
        <begin position="242"/>
        <end position="262"/>
    </location>
</feature>
<feature type="transmembrane region" description="Helical" evidence="1">
    <location>
        <begin position="272"/>
        <end position="292"/>
    </location>
</feature>
<feature type="transmembrane region" description="Helical" evidence="1">
    <location>
        <begin position="305"/>
        <end position="325"/>
    </location>
</feature>
<feature type="transmembrane region" description="Helical" evidence="1">
    <location>
        <begin position="330"/>
        <end position="350"/>
    </location>
</feature>
<feature type="transmembrane region" description="Helical" evidence="1">
    <location>
        <begin position="386"/>
        <end position="406"/>
    </location>
</feature>
<feature type="transmembrane region" description="Helical" evidence="1">
    <location>
        <begin position="416"/>
        <end position="436"/>
    </location>
</feature>
<feature type="transmembrane region" description="Helical" evidence="1">
    <location>
        <begin position="462"/>
        <end position="482"/>
    </location>
</feature>
<dbReference type="EC" id="7.1.1.-" evidence="1"/>
<dbReference type="EMBL" id="EU262891">
    <property type="protein sequence ID" value="ABX10170.1"/>
    <property type="molecule type" value="Genomic_DNA"/>
</dbReference>
<dbReference type="RefSeq" id="YP_001687500.1">
    <property type="nucleotide sequence ID" value="NC_010362.1"/>
</dbReference>
<dbReference type="SMR" id="B0Z5H7"/>
<dbReference type="GeneID" id="5955486"/>
<dbReference type="GO" id="GO:0009535">
    <property type="term" value="C:chloroplast thylakoid membrane"/>
    <property type="evidence" value="ECO:0007669"/>
    <property type="project" value="UniProtKB-SubCell"/>
</dbReference>
<dbReference type="GO" id="GO:0008137">
    <property type="term" value="F:NADH dehydrogenase (ubiquinone) activity"/>
    <property type="evidence" value="ECO:0007669"/>
    <property type="project" value="InterPro"/>
</dbReference>
<dbReference type="GO" id="GO:0048039">
    <property type="term" value="F:ubiquinone binding"/>
    <property type="evidence" value="ECO:0007669"/>
    <property type="project" value="TreeGrafter"/>
</dbReference>
<dbReference type="GO" id="GO:0042773">
    <property type="term" value="P:ATP synthesis coupled electron transport"/>
    <property type="evidence" value="ECO:0007669"/>
    <property type="project" value="InterPro"/>
</dbReference>
<dbReference type="GO" id="GO:0015990">
    <property type="term" value="P:electron transport coupled proton transport"/>
    <property type="evidence" value="ECO:0007669"/>
    <property type="project" value="TreeGrafter"/>
</dbReference>
<dbReference type="HAMAP" id="MF_00491">
    <property type="entry name" value="NDH1_NuoM"/>
    <property type="match status" value="1"/>
</dbReference>
<dbReference type="InterPro" id="IPR022997">
    <property type="entry name" value="NADH_Q_OxRdtase_chain4"/>
</dbReference>
<dbReference type="InterPro" id="IPR010227">
    <property type="entry name" value="NADH_Q_OxRdtase_chainM/4"/>
</dbReference>
<dbReference type="InterPro" id="IPR003918">
    <property type="entry name" value="NADH_UbQ_OxRdtase"/>
</dbReference>
<dbReference type="InterPro" id="IPR001750">
    <property type="entry name" value="ND/Mrp_TM"/>
</dbReference>
<dbReference type="NCBIfam" id="TIGR01972">
    <property type="entry name" value="NDH_I_M"/>
    <property type="match status" value="1"/>
</dbReference>
<dbReference type="PANTHER" id="PTHR43507:SF21">
    <property type="entry name" value="NAD(P)H-QUINONE OXIDOREDUCTASE CHAIN 4, CHLOROPLASTIC"/>
    <property type="match status" value="1"/>
</dbReference>
<dbReference type="PANTHER" id="PTHR43507">
    <property type="entry name" value="NADH-UBIQUINONE OXIDOREDUCTASE CHAIN 4"/>
    <property type="match status" value="1"/>
</dbReference>
<dbReference type="Pfam" id="PF00361">
    <property type="entry name" value="Proton_antipo_M"/>
    <property type="match status" value="1"/>
</dbReference>
<dbReference type="PRINTS" id="PR01437">
    <property type="entry name" value="NUOXDRDTASE4"/>
</dbReference>
<name>NU4C_OENPA</name>
<evidence type="ECO:0000255" key="1">
    <source>
        <dbReference type="HAMAP-Rule" id="MF_00491"/>
    </source>
</evidence>
<geneLocation type="chloroplast"/>
<sequence>MNSFPWLTIIVVFPILTGSLIFLLPHRGNKVMKWYTLCICILELLLTTYTFCYHFQLDDPLTQLTENYKWIHFFDFYWRLGIDGLSIGPILLTGFITTLATLAAWPVTRDAQLFHFLMLAMYSGQIGSFSSRDLLLFFLMWEFELIPVYLLLSMWGGKKRLYSATKFILYTAGGSIFLLIGVLGIGLYGSNEPTLNFETLANQSYPVALEVIFYVGFLIAFAVKLPIIPLHTWLPDTHGEAHYSTCMLLAGILLKMGAYGLVRINMELLPHAHCLFSPGLIIVGAIQIIYAASTSPGQLNLKKRIAYSSISHMGFIIIGIGSLSDTGLNGAILQIISHGFIGAALFFLAGTSYDRIRLLYLDEMGGMAIPLPKLFTMLSILSMASLALPGLSGFVAELLVFFGIITSQKYLLMPKILIAFLMAIGMILTPIYSLSMLRQMFYGYKLFNVPNYYFFDSGPRELFVSISLLLPIIGIGIYPDFVLSLSVEKVEAIISHFFFR</sequence>
<proteinExistence type="inferred from homology"/>